<sequence>MEDSSLPVVPAPIAAPGPAPSATAPRVPFHCSECGKSFRYRSDLRRHFARHTALKPHACPRCGKGFKHSFNLANHLRSHTGERPYRCSACPKGFRDSTGLLHHQVVHTGEKPYCCLVCELRFSSRSSLGRHLKRQHRGTLPSPLQPSPGLPPLSSPCSVCCNVGPCSVCGGGGSSGGEGLEGAGATSWGLAEAAAAAAASLPPFACGACARRFDHGRELAAHWAAHTDVKPFKCPRCERDFNAPALLERHKLTHDLQGSNAPPTQVWASGGGPEVAGEGDASEVGAAPQTWDAGLLLSPTGAGVPKLEALLPGDEGSGNDQAPAAAAEASSEDTLYQCDCGTFFASAPALASHLEAHSGPATYGCGHCGALYAALAALEEHRRASHGEGSGEAAPDGEGNQAAGGPGPGSSSRSKKIFGCSECEKLFRSPRDLERHVLVHTGEKPFPCLECGKFFRHECYLKRHRLLHGTERPFPCHICGKGFITLSNLSRHLKLHRGMD</sequence>
<evidence type="ECO:0000250" key="1"/>
<evidence type="ECO:0000250" key="2">
    <source>
        <dbReference type="UniProtKB" id="Q96SL8"/>
    </source>
</evidence>
<evidence type="ECO:0000255" key="3">
    <source>
        <dbReference type="PROSITE-ProRule" id="PRU00042"/>
    </source>
</evidence>
<evidence type="ECO:0000256" key="4">
    <source>
        <dbReference type="SAM" id="MobiDB-lite"/>
    </source>
</evidence>
<evidence type="ECO:0000269" key="5">
    <source>
    </source>
</evidence>
<evidence type="ECO:0000269" key="6">
    <source>
    </source>
</evidence>
<evidence type="ECO:0000305" key="7"/>
<reference key="1">
    <citation type="journal article" date="1999" name="J. Biol. Chem.">
        <title>Fiz1, a novel zinc finger protein interacting with the receptor tyrosine kinase Flt3.</title>
        <authorList>
            <person name="Wolf I."/>
            <person name="Rohrschneider L.R."/>
        </authorList>
    </citation>
    <scope>NUCLEOTIDE SEQUENCE [MRNA]</scope>
    <scope>INTERACTION WITH FLT3</scope>
    <scope>SUBCELLULAR LOCATION</scope>
    <scope>TISSUE SPECIFICITY</scope>
    <source>
        <strain>C57BL/6 X DBA/2</strain>
        <tissue>Hematopoietic stem cell</tissue>
    </source>
</reference>
<reference key="2">
    <citation type="journal article" date="2004" name="Genome Res.">
        <title>The status, quality, and expansion of the NIH full-length cDNA project: the Mammalian Gene Collection (MGC).</title>
        <authorList>
            <consortium name="The MGC Project Team"/>
        </authorList>
    </citation>
    <scope>NUCLEOTIDE SEQUENCE [LARGE SCALE MRNA]</scope>
    <source>
        <tissue>Mammary tumor</tissue>
    </source>
</reference>
<reference key="3">
    <citation type="journal article" date="2005" name="Science">
        <title>The transcriptional landscape of the mammalian genome.</title>
        <authorList>
            <person name="Carninci P."/>
            <person name="Kasukawa T."/>
            <person name="Katayama S."/>
            <person name="Gough J."/>
            <person name="Frith M.C."/>
            <person name="Maeda N."/>
            <person name="Oyama R."/>
            <person name="Ravasi T."/>
            <person name="Lenhard B."/>
            <person name="Wells C."/>
            <person name="Kodzius R."/>
            <person name="Shimokawa K."/>
            <person name="Bajic V.B."/>
            <person name="Brenner S.E."/>
            <person name="Batalov S."/>
            <person name="Forrest A.R."/>
            <person name="Zavolan M."/>
            <person name="Davis M.J."/>
            <person name="Wilming L.G."/>
            <person name="Aidinis V."/>
            <person name="Allen J.E."/>
            <person name="Ambesi-Impiombato A."/>
            <person name="Apweiler R."/>
            <person name="Aturaliya R.N."/>
            <person name="Bailey T.L."/>
            <person name="Bansal M."/>
            <person name="Baxter L."/>
            <person name="Beisel K.W."/>
            <person name="Bersano T."/>
            <person name="Bono H."/>
            <person name="Chalk A.M."/>
            <person name="Chiu K.P."/>
            <person name="Choudhary V."/>
            <person name="Christoffels A."/>
            <person name="Clutterbuck D.R."/>
            <person name="Crowe M.L."/>
            <person name="Dalla E."/>
            <person name="Dalrymple B.P."/>
            <person name="de Bono B."/>
            <person name="Della Gatta G."/>
            <person name="di Bernardo D."/>
            <person name="Down T."/>
            <person name="Engstrom P."/>
            <person name="Fagiolini M."/>
            <person name="Faulkner G."/>
            <person name="Fletcher C.F."/>
            <person name="Fukushima T."/>
            <person name="Furuno M."/>
            <person name="Futaki S."/>
            <person name="Gariboldi M."/>
            <person name="Georgii-Hemming P."/>
            <person name="Gingeras T.R."/>
            <person name="Gojobori T."/>
            <person name="Green R.E."/>
            <person name="Gustincich S."/>
            <person name="Harbers M."/>
            <person name="Hayashi Y."/>
            <person name="Hensch T.K."/>
            <person name="Hirokawa N."/>
            <person name="Hill D."/>
            <person name="Huminiecki L."/>
            <person name="Iacono M."/>
            <person name="Ikeo K."/>
            <person name="Iwama A."/>
            <person name="Ishikawa T."/>
            <person name="Jakt M."/>
            <person name="Kanapin A."/>
            <person name="Katoh M."/>
            <person name="Kawasawa Y."/>
            <person name="Kelso J."/>
            <person name="Kitamura H."/>
            <person name="Kitano H."/>
            <person name="Kollias G."/>
            <person name="Krishnan S.P."/>
            <person name="Kruger A."/>
            <person name="Kummerfeld S.K."/>
            <person name="Kurochkin I.V."/>
            <person name="Lareau L.F."/>
            <person name="Lazarevic D."/>
            <person name="Lipovich L."/>
            <person name="Liu J."/>
            <person name="Liuni S."/>
            <person name="McWilliam S."/>
            <person name="Madan Babu M."/>
            <person name="Madera M."/>
            <person name="Marchionni L."/>
            <person name="Matsuda H."/>
            <person name="Matsuzawa S."/>
            <person name="Miki H."/>
            <person name="Mignone F."/>
            <person name="Miyake S."/>
            <person name="Morris K."/>
            <person name="Mottagui-Tabar S."/>
            <person name="Mulder N."/>
            <person name="Nakano N."/>
            <person name="Nakauchi H."/>
            <person name="Ng P."/>
            <person name="Nilsson R."/>
            <person name="Nishiguchi S."/>
            <person name="Nishikawa S."/>
            <person name="Nori F."/>
            <person name="Ohara O."/>
            <person name="Okazaki Y."/>
            <person name="Orlando V."/>
            <person name="Pang K.C."/>
            <person name="Pavan W.J."/>
            <person name="Pavesi G."/>
            <person name="Pesole G."/>
            <person name="Petrovsky N."/>
            <person name="Piazza S."/>
            <person name="Reed J."/>
            <person name="Reid J.F."/>
            <person name="Ring B.Z."/>
            <person name="Ringwald M."/>
            <person name="Rost B."/>
            <person name="Ruan Y."/>
            <person name="Salzberg S.L."/>
            <person name="Sandelin A."/>
            <person name="Schneider C."/>
            <person name="Schoenbach C."/>
            <person name="Sekiguchi K."/>
            <person name="Semple C.A."/>
            <person name="Seno S."/>
            <person name="Sessa L."/>
            <person name="Sheng Y."/>
            <person name="Shibata Y."/>
            <person name="Shimada H."/>
            <person name="Shimada K."/>
            <person name="Silva D."/>
            <person name="Sinclair B."/>
            <person name="Sperling S."/>
            <person name="Stupka E."/>
            <person name="Sugiura K."/>
            <person name="Sultana R."/>
            <person name="Takenaka Y."/>
            <person name="Taki K."/>
            <person name="Tammoja K."/>
            <person name="Tan S.L."/>
            <person name="Tang S."/>
            <person name="Taylor M.S."/>
            <person name="Tegner J."/>
            <person name="Teichmann S.A."/>
            <person name="Ueda H.R."/>
            <person name="van Nimwegen E."/>
            <person name="Verardo R."/>
            <person name="Wei C.L."/>
            <person name="Yagi K."/>
            <person name="Yamanishi H."/>
            <person name="Zabarovsky E."/>
            <person name="Zhu S."/>
            <person name="Zimmer A."/>
            <person name="Hide W."/>
            <person name="Bult C."/>
            <person name="Grimmond S.M."/>
            <person name="Teasdale R.D."/>
            <person name="Liu E.T."/>
            <person name="Brusic V."/>
            <person name="Quackenbush J."/>
            <person name="Wahlestedt C."/>
            <person name="Mattick J.S."/>
            <person name="Hume D.A."/>
            <person name="Kai C."/>
            <person name="Sasaki D."/>
            <person name="Tomaru Y."/>
            <person name="Fukuda S."/>
            <person name="Kanamori-Katayama M."/>
            <person name="Suzuki M."/>
            <person name="Aoki J."/>
            <person name="Arakawa T."/>
            <person name="Iida J."/>
            <person name="Imamura K."/>
            <person name="Itoh M."/>
            <person name="Kato T."/>
            <person name="Kawaji H."/>
            <person name="Kawagashira N."/>
            <person name="Kawashima T."/>
            <person name="Kojima M."/>
            <person name="Kondo S."/>
            <person name="Konno H."/>
            <person name="Nakano K."/>
            <person name="Ninomiya N."/>
            <person name="Nishio T."/>
            <person name="Okada M."/>
            <person name="Plessy C."/>
            <person name="Shibata K."/>
            <person name="Shiraki T."/>
            <person name="Suzuki S."/>
            <person name="Tagami M."/>
            <person name="Waki K."/>
            <person name="Watahiki A."/>
            <person name="Okamura-Oho Y."/>
            <person name="Suzuki H."/>
            <person name="Kawai J."/>
            <person name="Hayashizaki Y."/>
        </authorList>
    </citation>
    <scope>NUCLEOTIDE SEQUENCE [LARGE SCALE MRNA] OF 239-500</scope>
    <source>
        <strain>C57BL/6J</strain>
        <tissue>Embryo</tissue>
    </source>
</reference>
<reference key="4">
    <citation type="journal article" date="2003" name="Hum. Mol. Genet.">
        <title>Interaction of retinal bZIP transcription factor NRL with Flt3-interacting zinc-finger protein Fiz1: possible role of Fiz1 as a transcriptional repressor.</title>
        <authorList>
            <person name="Mitton K.P."/>
            <person name="Swain P.K."/>
            <person name="Khanna H."/>
            <person name="Dowd M."/>
            <person name="Apel I.J."/>
            <person name="Swaroop A."/>
        </authorList>
    </citation>
    <scope>TISSUE SPECIFICITY</scope>
    <scope>DEVELOPMENTAL STAGE</scope>
</reference>
<dbReference type="EMBL" id="AF126747">
    <property type="protein sequence ID" value="AAD45499.1"/>
    <property type="molecule type" value="mRNA"/>
</dbReference>
<dbReference type="EMBL" id="AF126746">
    <property type="protein sequence ID" value="AAD45498.1"/>
    <property type="molecule type" value="mRNA"/>
</dbReference>
<dbReference type="EMBL" id="BC006633">
    <property type="protein sequence ID" value="AAH06633.1"/>
    <property type="molecule type" value="mRNA"/>
</dbReference>
<dbReference type="EMBL" id="AK003641">
    <property type="protein sequence ID" value="BAB22907.1"/>
    <property type="molecule type" value="mRNA"/>
</dbReference>
<dbReference type="CCDS" id="CCDS20751.1"/>
<dbReference type="RefSeq" id="NP_001103798.1">
    <property type="nucleotide sequence ID" value="NM_001110328.2"/>
</dbReference>
<dbReference type="RefSeq" id="NP_001103799.1">
    <property type="nucleotide sequence ID" value="NM_001110329.1"/>
</dbReference>
<dbReference type="RefSeq" id="NP_001103800.1">
    <property type="nucleotide sequence ID" value="NM_001110330.1"/>
</dbReference>
<dbReference type="RefSeq" id="NP_001347170.1">
    <property type="nucleotide sequence ID" value="NM_001360241.1"/>
</dbReference>
<dbReference type="RefSeq" id="NP_001347171.1">
    <property type="nucleotide sequence ID" value="NM_001360242.1"/>
</dbReference>
<dbReference type="RefSeq" id="NP_001347172.1">
    <property type="nucleotide sequence ID" value="NM_001360243.1"/>
</dbReference>
<dbReference type="RefSeq" id="NP_035943.3">
    <property type="nucleotide sequence ID" value="NM_011813.3"/>
</dbReference>
<dbReference type="RefSeq" id="XP_006539970.1">
    <property type="nucleotide sequence ID" value="XM_006539907.3"/>
</dbReference>
<dbReference type="SMR" id="Q9WTJ4"/>
<dbReference type="BioGRID" id="204770">
    <property type="interactions" value="5"/>
</dbReference>
<dbReference type="FunCoup" id="Q9WTJ4">
    <property type="interactions" value="1295"/>
</dbReference>
<dbReference type="IntAct" id="Q9WTJ4">
    <property type="interactions" value="2"/>
</dbReference>
<dbReference type="MINT" id="Q9WTJ4"/>
<dbReference type="STRING" id="10090.ENSMUSP00000128105"/>
<dbReference type="GlyGen" id="Q9WTJ4">
    <property type="glycosylation" value="1 site, 1 O-linked glycan (1 site)"/>
</dbReference>
<dbReference type="iPTMnet" id="Q9WTJ4"/>
<dbReference type="PhosphoSitePlus" id="Q9WTJ4"/>
<dbReference type="SwissPalm" id="Q9WTJ4"/>
<dbReference type="PaxDb" id="10090-ENSMUSP00000128105"/>
<dbReference type="ProteomicsDB" id="271698"/>
<dbReference type="Pumba" id="Q9WTJ4"/>
<dbReference type="Antibodypedia" id="33128">
    <property type="antibodies" value="148 antibodies from 23 providers"/>
</dbReference>
<dbReference type="DNASU" id="23877"/>
<dbReference type="Ensembl" id="ENSMUST00000077385.15">
    <property type="protein sequence ID" value="ENSMUSP00000076603.8"/>
    <property type="gene ID" value="ENSMUSG00000061374.15"/>
</dbReference>
<dbReference type="Ensembl" id="ENSMUST00000165320.3">
    <property type="protein sequence ID" value="ENSMUSP00000128105.2"/>
    <property type="gene ID" value="ENSMUSG00000061374.15"/>
</dbReference>
<dbReference type="Ensembl" id="ENSMUST00000167804.9">
    <property type="protein sequence ID" value="ENSMUSP00000126765.2"/>
    <property type="gene ID" value="ENSMUSG00000061374.15"/>
</dbReference>
<dbReference type="Ensembl" id="ENSMUST00000207030.2">
    <property type="protein sequence ID" value="ENSMUSP00000147082.2"/>
    <property type="gene ID" value="ENSMUSG00000061374.15"/>
</dbReference>
<dbReference type="Ensembl" id="ENSMUST00000208944.2">
    <property type="protein sequence ID" value="ENSMUSP00000147011.2"/>
    <property type="gene ID" value="ENSMUSG00000061374.15"/>
</dbReference>
<dbReference type="GeneID" id="23877"/>
<dbReference type="KEGG" id="mmu:23877"/>
<dbReference type="UCSC" id="uc009eze.2">
    <property type="organism name" value="mouse"/>
</dbReference>
<dbReference type="AGR" id="MGI:1344336"/>
<dbReference type="CTD" id="84922"/>
<dbReference type="MGI" id="MGI:1344336">
    <property type="gene designation" value="Fiz1"/>
</dbReference>
<dbReference type="VEuPathDB" id="HostDB:ENSMUSG00000061374"/>
<dbReference type="eggNOG" id="KOG1721">
    <property type="taxonomic scope" value="Eukaryota"/>
</dbReference>
<dbReference type="GeneTree" id="ENSGT00940000153306"/>
<dbReference type="HOGENOM" id="CLU_047914_0_0_1"/>
<dbReference type="InParanoid" id="Q9WTJ4"/>
<dbReference type="OMA" id="SLYQCEC"/>
<dbReference type="OrthoDB" id="3437960at2759"/>
<dbReference type="PhylomeDB" id="Q9WTJ4"/>
<dbReference type="TreeFam" id="TF337381"/>
<dbReference type="BioGRID-ORCS" id="23877">
    <property type="hits" value="1 hit in 77 CRISPR screens"/>
</dbReference>
<dbReference type="ChiTaRS" id="Fiz1">
    <property type="organism name" value="mouse"/>
</dbReference>
<dbReference type="PRO" id="PR:Q9WTJ4"/>
<dbReference type="Proteomes" id="UP000000589">
    <property type="component" value="Chromosome 7"/>
</dbReference>
<dbReference type="RNAct" id="Q9WTJ4">
    <property type="molecule type" value="protein"/>
</dbReference>
<dbReference type="Bgee" id="ENSMUSG00000061374">
    <property type="expression patterns" value="Expressed in cerebellum ventricular layer and 274 other cell types or tissues"/>
</dbReference>
<dbReference type="ExpressionAtlas" id="Q9WTJ4">
    <property type="expression patterns" value="baseline and differential"/>
</dbReference>
<dbReference type="GO" id="GO:0000785">
    <property type="term" value="C:chromatin"/>
    <property type="evidence" value="ECO:0000314"/>
    <property type="project" value="ARUK-UCL"/>
</dbReference>
<dbReference type="GO" id="GO:0005737">
    <property type="term" value="C:cytoplasm"/>
    <property type="evidence" value="ECO:0000314"/>
    <property type="project" value="MGI"/>
</dbReference>
<dbReference type="GO" id="GO:0005634">
    <property type="term" value="C:nucleus"/>
    <property type="evidence" value="ECO:0000314"/>
    <property type="project" value="MGI"/>
</dbReference>
<dbReference type="GO" id="GO:0030971">
    <property type="term" value="F:receptor tyrosine kinase binding"/>
    <property type="evidence" value="ECO:0000353"/>
    <property type="project" value="UniProtKB"/>
</dbReference>
<dbReference type="GO" id="GO:0061629">
    <property type="term" value="F:RNA polymerase II-specific DNA-binding transcription factor binding"/>
    <property type="evidence" value="ECO:0000250"/>
    <property type="project" value="ARUK-UCL"/>
</dbReference>
<dbReference type="GO" id="GO:0003713">
    <property type="term" value="F:transcription coactivator activity"/>
    <property type="evidence" value="ECO:0000250"/>
    <property type="project" value="ARUK-UCL"/>
</dbReference>
<dbReference type="GO" id="GO:0008270">
    <property type="term" value="F:zinc ion binding"/>
    <property type="evidence" value="ECO:0007669"/>
    <property type="project" value="UniProtKB-KW"/>
</dbReference>
<dbReference type="GO" id="GO:0045944">
    <property type="term" value="P:positive regulation of transcription by RNA polymerase II"/>
    <property type="evidence" value="ECO:0000250"/>
    <property type="project" value="ARUK-UCL"/>
</dbReference>
<dbReference type="FunFam" id="3.30.160.60:FF:000621">
    <property type="entry name" value="FLT3-interacting zinc finger 1"/>
    <property type="match status" value="1"/>
</dbReference>
<dbReference type="FunFam" id="3.30.160.60:FF:001365">
    <property type="entry name" value="Flt3-interacting zinc finger protein 1"/>
    <property type="match status" value="1"/>
</dbReference>
<dbReference type="FunFam" id="3.30.160.60:FF:001711">
    <property type="entry name" value="Flt3-interacting zinc finger protein 1"/>
    <property type="match status" value="1"/>
</dbReference>
<dbReference type="FunFam" id="3.30.160.60:FF:001859">
    <property type="entry name" value="Flt3-interacting zinc finger protein 1"/>
    <property type="match status" value="1"/>
</dbReference>
<dbReference type="FunFam" id="3.30.160.60:FF:000790">
    <property type="entry name" value="flt3-interacting zinc finger protein 1"/>
    <property type="match status" value="2"/>
</dbReference>
<dbReference type="FunFam" id="3.30.160.60:FF:000446">
    <property type="entry name" value="Zinc finger protein"/>
    <property type="match status" value="1"/>
</dbReference>
<dbReference type="FunFam" id="3.30.160.60:FF:000286">
    <property type="entry name" value="Zinc finger protein 770"/>
    <property type="match status" value="1"/>
</dbReference>
<dbReference type="Gene3D" id="3.30.160.60">
    <property type="entry name" value="Classic Zinc Finger"/>
    <property type="match status" value="9"/>
</dbReference>
<dbReference type="InterPro" id="IPR050826">
    <property type="entry name" value="Krueppel_C2H2_ZnFinger"/>
</dbReference>
<dbReference type="InterPro" id="IPR056436">
    <property type="entry name" value="Znf-C2H2_ZIC1-5/GLI1-3-like"/>
</dbReference>
<dbReference type="InterPro" id="IPR036236">
    <property type="entry name" value="Znf_C2H2_sf"/>
</dbReference>
<dbReference type="InterPro" id="IPR013087">
    <property type="entry name" value="Znf_C2H2_type"/>
</dbReference>
<dbReference type="PANTHER" id="PTHR24377">
    <property type="entry name" value="IP01015P-RELATED"/>
    <property type="match status" value="1"/>
</dbReference>
<dbReference type="Pfam" id="PF00096">
    <property type="entry name" value="zf-C2H2"/>
    <property type="match status" value="5"/>
</dbReference>
<dbReference type="Pfam" id="PF23561">
    <property type="entry name" value="zf-C2H2_15"/>
    <property type="match status" value="1"/>
</dbReference>
<dbReference type="SMART" id="SM00355">
    <property type="entry name" value="ZnF_C2H2"/>
    <property type="match status" value="11"/>
</dbReference>
<dbReference type="SUPFAM" id="SSF57667">
    <property type="entry name" value="beta-beta-alpha zinc fingers"/>
    <property type="match status" value="6"/>
</dbReference>
<dbReference type="PROSITE" id="PS00028">
    <property type="entry name" value="ZINC_FINGER_C2H2_1"/>
    <property type="match status" value="10"/>
</dbReference>
<dbReference type="PROSITE" id="PS50157">
    <property type="entry name" value="ZINC_FINGER_C2H2_2"/>
    <property type="match status" value="11"/>
</dbReference>
<protein>
    <recommendedName>
        <fullName>Flt3-interacting zinc finger protein 1</fullName>
    </recommendedName>
</protein>
<feature type="chain" id="PRO_0000046938" description="Flt3-interacting zinc finger protein 1">
    <location>
        <begin position="1"/>
        <end position="500"/>
    </location>
</feature>
<feature type="zinc finger region" description="C2H2-type 1" evidence="3">
    <location>
        <begin position="29"/>
        <end position="51"/>
    </location>
</feature>
<feature type="zinc finger region" description="C2H2-type 2" evidence="3">
    <location>
        <begin position="57"/>
        <end position="79"/>
    </location>
</feature>
<feature type="zinc finger region" description="C2H2-type 3" evidence="3">
    <location>
        <begin position="85"/>
        <end position="107"/>
    </location>
</feature>
<feature type="zinc finger region" description="C2H2-type 4" evidence="3">
    <location>
        <begin position="113"/>
        <end position="136"/>
    </location>
</feature>
<feature type="zinc finger region" description="C2H2-type 5" evidence="3">
    <location>
        <begin position="204"/>
        <end position="226"/>
    </location>
</feature>
<feature type="zinc finger region" description="C2H2-type 6" evidence="3">
    <location>
        <begin position="232"/>
        <end position="254"/>
    </location>
</feature>
<feature type="zinc finger region" description="C2H2-type 7" evidence="3">
    <location>
        <begin position="336"/>
        <end position="357"/>
    </location>
</feature>
<feature type="zinc finger region" description="C2H2-type 8" evidence="3">
    <location>
        <begin position="363"/>
        <end position="386"/>
    </location>
</feature>
<feature type="zinc finger region" description="C2H2-type 9" evidence="3">
    <location>
        <begin position="418"/>
        <end position="440"/>
    </location>
</feature>
<feature type="zinc finger region" description="C2H2-type 10" evidence="3">
    <location>
        <begin position="446"/>
        <end position="468"/>
    </location>
</feature>
<feature type="zinc finger region" description="C2H2-type 11" evidence="3">
    <location>
        <begin position="474"/>
        <end position="496"/>
    </location>
</feature>
<feature type="region of interest" description="Disordered" evidence="4">
    <location>
        <begin position="1"/>
        <end position="24"/>
    </location>
</feature>
<feature type="region of interest" description="Disordered" evidence="4">
    <location>
        <begin position="255"/>
        <end position="284"/>
    </location>
</feature>
<feature type="region of interest" description="Disordered" evidence="4">
    <location>
        <begin position="306"/>
        <end position="328"/>
    </location>
</feature>
<feature type="region of interest" description="Disordered" evidence="4">
    <location>
        <begin position="383"/>
        <end position="415"/>
    </location>
</feature>
<feature type="compositionally biased region" description="Pro residues" evidence="4">
    <location>
        <begin position="9"/>
        <end position="19"/>
    </location>
</feature>
<feature type="compositionally biased region" description="Polar residues" evidence="4">
    <location>
        <begin position="256"/>
        <end position="267"/>
    </location>
</feature>
<feature type="modified residue" description="N-acetylmethionine" evidence="2">
    <location>
        <position position="1"/>
    </location>
</feature>
<feature type="sequence conflict" description="In Ref. 2; AAH06633." evidence="7" ref="2">
    <original>G</original>
    <variation>D</variation>
    <location>
        <position position="404"/>
    </location>
</feature>
<organism>
    <name type="scientific">Mus musculus</name>
    <name type="common">Mouse</name>
    <dbReference type="NCBI Taxonomy" id="10090"/>
    <lineage>
        <taxon>Eukaryota</taxon>
        <taxon>Metazoa</taxon>
        <taxon>Chordata</taxon>
        <taxon>Craniata</taxon>
        <taxon>Vertebrata</taxon>
        <taxon>Euteleostomi</taxon>
        <taxon>Mammalia</taxon>
        <taxon>Eutheria</taxon>
        <taxon>Euarchontoglires</taxon>
        <taxon>Glires</taxon>
        <taxon>Rodentia</taxon>
        <taxon>Myomorpha</taxon>
        <taxon>Muroidea</taxon>
        <taxon>Muridae</taxon>
        <taxon>Murinae</taxon>
        <taxon>Mus</taxon>
        <taxon>Mus</taxon>
    </lineage>
</organism>
<accession>Q9WTJ4</accession>
<accession>Q91W14</accession>
<accession>Q9CTG3</accession>
<proteinExistence type="evidence at protein level"/>
<comment type="function">
    <text evidence="1">May be a transcriptional repressor of NRL function in photoreceptors. Does not repress CRX-mediated transactivation (By similarity).</text>
</comment>
<comment type="subunit">
    <text evidence="1">Interacts with FLT3 cytoplasmic catalytic domain, following receptor stimulation, in a kinase-independent manner. Does not interact with other structurally related receptor tyrosine kinases, including KIT, CSF1R and PDGFR. Interacts with NRL (By similarity).</text>
</comment>
<comment type="subcellular location">
    <subcellularLocation>
        <location evidence="5">Cytoplasm</location>
    </subcellularLocation>
    <subcellularLocation>
        <location evidence="5">Nucleus</location>
    </subcellularLocation>
</comment>
<comment type="tissue specificity">
    <text evidence="5 6">Widely expressed. In the retina, highest expression in the ganglion cell layer.</text>
</comment>
<comment type="developmental stage">
    <text evidence="6">Expressed in the retina at 14.5 dpc.</text>
</comment>
<keyword id="KW-0007">Acetylation</keyword>
<keyword id="KW-0963">Cytoplasm</keyword>
<keyword id="KW-0479">Metal-binding</keyword>
<keyword id="KW-0539">Nucleus</keyword>
<keyword id="KW-1185">Reference proteome</keyword>
<keyword id="KW-0677">Repeat</keyword>
<keyword id="KW-0678">Repressor</keyword>
<keyword id="KW-0804">Transcription</keyword>
<keyword id="KW-0805">Transcription regulation</keyword>
<keyword id="KW-0862">Zinc</keyword>
<keyword id="KW-0863">Zinc-finger</keyword>
<name>FIZ1_MOUSE</name>
<gene>
    <name type="primary">Fiz1</name>
</gene>